<comment type="function">
    <text evidence="1">Catalyzes the ATP-dependent conversion of 7-carboxy-7-deazaguanine (CDG) to 7-cyano-7-deazaguanine (preQ(0)).</text>
</comment>
<comment type="catalytic activity">
    <reaction evidence="1">
        <text>7-carboxy-7-deazaguanine + NH4(+) + ATP = 7-cyano-7-deazaguanine + ADP + phosphate + H2O + H(+)</text>
        <dbReference type="Rhea" id="RHEA:27982"/>
        <dbReference type="ChEBI" id="CHEBI:15377"/>
        <dbReference type="ChEBI" id="CHEBI:15378"/>
        <dbReference type="ChEBI" id="CHEBI:28938"/>
        <dbReference type="ChEBI" id="CHEBI:30616"/>
        <dbReference type="ChEBI" id="CHEBI:43474"/>
        <dbReference type="ChEBI" id="CHEBI:45075"/>
        <dbReference type="ChEBI" id="CHEBI:61036"/>
        <dbReference type="ChEBI" id="CHEBI:456216"/>
        <dbReference type="EC" id="6.3.4.20"/>
    </reaction>
</comment>
<comment type="cofactor">
    <cofactor evidence="1">
        <name>Zn(2+)</name>
        <dbReference type="ChEBI" id="CHEBI:29105"/>
    </cofactor>
    <text evidence="1">Binds 1 zinc ion per subunit.</text>
</comment>
<comment type="pathway">
    <text evidence="1">Purine metabolism; 7-cyano-7-deazaguanine biosynthesis.</text>
</comment>
<comment type="subunit">
    <text evidence="1">Homodimer.</text>
</comment>
<comment type="similarity">
    <text evidence="1">Belongs to the QueC family.</text>
</comment>
<dbReference type="EC" id="6.3.4.20" evidence="1"/>
<dbReference type="EMBL" id="CP000419">
    <property type="protein sequence ID" value="ABJ66106.1"/>
    <property type="molecule type" value="Genomic_DNA"/>
</dbReference>
<dbReference type="RefSeq" id="WP_011681062.1">
    <property type="nucleotide sequence ID" value="NC_008532.1"/>
</dbReference>
<dbReference type="SMR" id="Q03L16"/>
<dbReference type="KEGG" id="ste:STER_0869"/>
<dbReference type="HOGENOM" id="CLU_081854_0_0_9"/>
<dbReference type="UniPathway" id="UPA00391"/>
<dbReference type="GO" id="GO:0005524">
    <property type="term" value="F:ATP binding"/>
    <property type="evidence" value="ECO:0007669"/>
    <property type="project" value="UniProtKB-UniRule"/>
</dbReference>
<dbReference type="GO" id="GO:0016879">
    <property type="term" value="F:ligase activity, forming carbon-nitrogen bonds"/>
    <property type="evidence" value="ECO:0007669"/>
    <property type="project" value="UniProtKB-UniRule"/>
</dbReference>
<dbReference type="GO" id="GO:0008270">
    <property type="term" value="F:zinc ion binding"/>
    <property type="evidence" value="ECO:0007669"/>
    <property type="project" value="UniProtKB-UniRule"/>
</dbReference>
<dbReference type="GO" id="GO:0008616">
    <property type="term" value="P:queuosine biosynthetic process"/>
    <property type="evidence" value="ECO:0007669"/>
    <property type="project" value="UniProtKB-UniRule"/>
</dbReference>
<dbReference type="CDD" id="cd01995">
    <property type="entry name" value="QueC-like"/>
    <property type="match status" value="1"/>
</dbReference>
<dbReference type="FunFam" id="3.40.50.620:FF:000017">
    <property type="entry name" value="7-cyano-7-deazaguanine synthase"/>
    <property type="match status" value="1"/>
</dbReference>
<dbReference type="Gene3D" id="3.40.50.620">
    <property type="entry name" value="HUPs"/>
    <property type="match status" value="1"/>
</dbReference>
<dbReference type="HAMAP" id="MF_01633">
    <property type="entry name" value="QueC"/>
    <property type="match status" value="1"/>
</dbReference>
<dbReference type="InterPro" id="IPR018317">
    <property type="entry name" value="QueC"/>
</dbReference>
<dbReference type="InterPro" id="IPR014729">
    <property type="entry name" value="Rossmann-like_a/b/a_fold"/>
</dbReference>
<dbReference type="NCBIfam" id="TIGR00364">
    <property type="entry name" value="7-cyano-7-deazaguanine synthase QueC"/>
    <property type="match status" value="1"/>
</dbReference>
<dbReference type="PANTHER" id="PTHR42914">
    <property type="entry name" value="7-CYANO-7-DEAZAGUANINE SYNTHASE"/>
    <property type="match status" value="1"/>
</dbReference>
<dbReference type="PANTHER" id="PTHR42914:SF1">
    <property type="entry name" value="7-CYANO-7-DEAZAGUANINE SYNTHASE"/>
    <property type="match status" value="1"/>
</dbReference>
<dbReference type="Pfam" id="PF06508">
    <property type="entry name" value="QueC"/>
    <property type="match status" value="1"/>
</dbReference>
<dbReference type="PIRSF" id="PIRSF006293">
    <property type="entry name" value="ExsB"/>
    <property type="match status" value="1"/>
</dbReference>
<dbReference type="SUPFAM" id="SSF52402">
    <property type="entry name" value="Adenine nucleotide alpha hydrolases-like"/>
    <property type="match status" value="1"/>
</dbReference>
<reference key="1">
    <citation type="journal article" date="2006" name="Proc. Natl. Acad. Sci. U.S.A.">
        <title>Comparative genomics of the lactic acid bacteria.</title>
        <authorList>
            <person name="Makarova K.S."/>
            <person name="Slesarev A."/>
            <person name="Wolf Y.I."/>
            <person name="Sorokin A."/>
            <person name="Mirkin B."/>
            <person name="Koonin E.V."/>
            <person name="Pavlov A."/>
            <person name="Pavlova N."/>
            <person name="Karamychev V."/>
            <person name="Polouchine N."/>
            <person name="Shakhova V."/>
            <person name="Grigoriev I."/>
            <person name="Lou Y."/>
            <person name="Rohksar D."/>
            <person name="Lucas S."/>
            <person name="Huang K."/>
            <person name="Goodstein D.M."/>
            <person name="Hawkins T."/>
            <person name="Plengvidhya V."/>
            <person name="Welker D."/>
            <person name="Hughes J."/>
            <person name="Goh Y."/>
            <person name="Benson A."/>
            <person name="Baldwin K."/>
            <person name="Lee J.-H."/>
            <person name="Diaz-Muniz I."/>
            <person name="Dosti B."/>
            <person name="Smeianov V."/>
            <person name="Wechter W."/>
            <person name="Barabote R."/>
            <person name="Lorca G."/>
            <person name="Altermann E."/>
            <person name="Barrangou R."/>
            <person name="Ganesan B."/>
            <person name="Xie Y."/>
            <person name="Rawsthorne H."/>
            <person name="Tamir D."/>
            <person name="Parker C."/>
            <person name="Breidt F."/>
            <person name="Broadbent J.R."/>
            <person name="Hutkins R."/>
            <person name="O'Sullivan D."/>
            <person name="Steele J."/>
            <person name="Unlu G."/>
            <person name="Saier M.H. Jr."/>
            <person name="Klaenhammer T."/>
            <person name="Richardson P."/>
            <person name="Kozyavkin S."/>
            <person name="Weimer B.C."/>
            <person name="Mills D.A."/>
        </authorList>
    </citation>
    <scope>NUCLEOTIDE SEQUENCE [LARGE SCALE GENOMIC DNA]</scope>
    <source>
        <strain>ATCC BAA-491 / LMD-9</strain>
    </source>
</reference>
<name>QUEC_STRTD</name>
<keyword id="KW-0067">ATP-binding</keyword>
<keyword id="KW-0436">Ligase</keyword>
<keyword id="KW-0479">Metal-binding</keyword>
<keyword id="KW-0547">Nucleotide-binding</keyword>
<keyword id="KW-0671">Queuosine biosynthesis</keyword>
<keyword id="KW-0862">Zinc</keyword>
<feature type="chain" id="PRO_0000336958" description="7-cyano-7-deazaguanine synthase">
    <location>
        <begin position="1"/>
        <end position="217"/>
    </location>
</feature>
<feature type="binding site" evidence="1">
    <location>
        <begin position="10"/>
        <end position="20"/>
    </location>
    <ligand>
        <name>ATP</name>
        <dbReference type="ChEBI" id="CHEBI:30616"/>
    </ligand>
</feature>
<feature type="binding site" evidence="1">
    <location>
        <position position="185"/>
    </location>
    <ligand>
        <name>Zn(2+)</name>
        <dbReference type="ChEBI" id="CHEBI:29105"/>
    </ligand>
</feature>
<feature type="binding site" evidence="1">
    <location>
        <position position="194"/>
    </location>
    <ligand>
        <name>Zn(2+)</name>
        <dbReference type="ChEBI" id="CHEBI:29105"/>
    </ligand>
</feature>
<feature type="binding site" evidence="1">
    <location>
        <position position="197"/>
    </location>
    <ligand>
        <name>Zn(2+)</name>
        <dbReference type="ChEBI" id="CHEBI:29105"/>
    </ligand>
</feature>
<feature type="binding site" evidence="1">
    <location>
        <position position="200"/>
    </location>
    <ligand>
        <name>Zn(2+)</name>
        <dbReference type="ChEBI" id="CHEBI:29105"/>
    </ligand>
</feature>
<accession>Q03L16</accession>
<gene>
    <name evidence="1" type="primary">queC</name>
    <name type="ordered locus">STER_0869</name>
</gene>
<evidence type="ECO:0000255" key="1">
    <source>
        <dbReference type="HAMAP-Rule" id="MF_01633"/>
    </source>
</evidence>
<sequence>MKRQSALIVFSGGQDSTTCLFWALKHYEIVELVTFAYGQRHSLEIEVAKEIAQEQGLKHHVLDMSLLGQITENALTSDIDIEAEEGEVPNTFVDGRNHLFLSFAAVLAKQRGIIDIVTGVCETDFSGYPDCRDVFVKSLNVTLNLAMAYDFVIQTPLMWLDKAETWALADQLGAFDYVREKTLTCYNGIIGTGCGDCPACHLRQKGLEKYLAEKGDA</sequence>
<proteinExistence type="inferred from homology"/>
<protein>
    <recommendedName>
        <fullName evidence="1">7-cyano-7-deazaguanine synthase</fullName>
        <ecNumber evidence="1">6.3.4.20</ecNumber>
    </recommendedName>
    <alternativeName>
        <fullName evidence="1">7-cyano-7-carbaguanine synthase</fullName>
    </alternativeName>
    <alternativeName>
        <fullName evidence="1">PreQ(0) synthase</fullName>
    </alternativeName>
    <alternativeName>
        <fullName evidence="1">Queuosine biosynthesis protein QueC</fullName>
    </alternativeName>
</protein>
<organism>
    <name type="scientific">Streptococcus thermophilus (strain ATCC BAA-491 / LMD-9)</name>
    <dbReference type="NCBI Taxonomy" id="322159"/>
    <lineage>
        <taxon>Bacteria</taxon>
        <taxon>Bacillati</taxon>
        <taxon>Bacillota</taxon>
        <taxon>Bacilli</taxon>
        <taxon>Lactobacillales</taxon>
        <taxon>Streptococcaceae</taxon>
        <taxon>Streptococcus</taxon>
    </lineage>
</organism>